<evidence type="ECO:0000250" key="1">
    <source>
        <dbReference type="UniProtKB" id="Q8N4T8"/>
    </source>
</evidence>
<evidence type="ECO:0000250" key="2">
    <source>
        <dbReference type="UniProtKB" id="Q91VT4"/>
    </source>
</evidence>
<evidence type="ECO:0000255" key="3">
    <source>
        <dbReference type="PROSITE-ProRule" id="PRU10001"/>
    </source>
</evidence>
<evidence type="ECO:0000305" key="4"/>
<accession>A4IFA7</accession>
<organism>
    <name type="scientific">Bos taurus</name>
    <name type="common">Bovine</name>
    <dbReference type="NCBI Taxonomy" id="9913"/>
    <lineage>
        <taxon>Eukaryota</taxon>
        <taxon>Metazoa</taxon>
        <taxon>Chordata</taxon>
        <taxon>Craniata</taxon>
        <taxon>Vertebrata</taxon>
        <taxon>Euteleostomi</taxon>
        <taxon>Mammalia</taxon>
        <taxon>Eutheria</taxon>
        <taxon>Laurasiatheria</taxon>
        <taxon>Artiodactyla</taxon>
        <taxon>Ruminantia</taxon>
        <taxon>Pecora</taxon>
        <taxon>Bovidae</taxon>
        <taxon>Bovinae</taxon>
        <taxon>Bos</taxon>
    </lineage>
</organism>
<proteinExistence type="evidence at transcript level"/>
<dbReference type="EC" id="1.1.1.100" evidence="1"/>
<dbReference type="EC" id="1.6.5.10" evidence="1"/>
<dbReference type="EMBL" id="BC134482">
    <property type="protein sequence ID" value="AAI34483.1"/>
    <property type="molecule type" value="mRNA"/>
</dbReference>
<dbReference type="RefSeq" id="NP_001077186.1">
    <property type="nucleotide sequence ID" value="NM_001083717.1"/>
</dbReference>
<dbReference type="SMR" id="A4IFA7"/>
<dbReference type="FunCoup" id="A4IFA7">
    <property type="interactions" value="1906"/>
</dbReference>
<dbReference type="STRING" id="9913.ENSBTAP00000029363"/>
<dbReference type="PaxDb" id="9913-ENSBTAP00000029363"/>
<dbReference type="PeptideAtlas" id="A4IFA7"/>
<dbReference type="Ensembl" id="ENSBTAT00000029363.4">
    <property type="protein sequence ID" value="ENSBTAP00000029363.3"/>
    <property type="gene ID" value="ENSBTAG00000022013.5"/>
</dbReference>
<dbReference type="GeneID" id="533020"/>
<dbReference type="KEGG" id="bta:533020"/>
<dbReference type="CTD" id="84869"/>
<dbReference type="VEuPathDB" id="HostDB:ENSBTAG00000022013"/>
<dbReference type="VGNC" id="VGNC:26815">
    <property type="gene designation" value="CBR4"/>
</dbReference>
<dbReference type="eggNOG" id="KOG1200">
    <property type="taxonomic scope" value="Eukaryota"/>
</dbReference>
<dbReference type="GeneTree" id="ENSGT00940000157620"/>
<dbReference type="HOGENOM" id="CLU_010194_1_3_1"/>
<dbReference type="InParanoid" id="A4IFA7"/>
<dbReference type="OMA" id="CQKHMVD"/>
<dbReference type="OrthoDB" id="294295at2759"/>
<dbReference type="TreeFam" id="TF354265"/>
<dbReference type="Reactome" id="R-BTA-75105">
    <property type="pathway name" value="Fatty acyl-CoA biosynthesis"/>
</dbReference>
<dbReference type="UniPathway" id="UPA00094"/>
<dbReference type="Proteomes" id="UP000009136">
    <property type="component" value="Chromosome 8"/>
</dbReference>
<dbReference type="Bgee" id="ENSBTAG00000022013">
    <property type="expression patterns" value="Expressed in metanephros cortex and 109 other cell types or tissues"/>
</dbReference>
<dbReference type="GO" id="GO:0005759">
    <property type="term" value="C:mitochondrial matrix"/>
    <property type="evidence" value="ECO:0000250"/>
    <property type="project" value="UniProtKB"/>
</dbReference>
<dbReference type="GO" id="GO:1990204">
    <property type="term" value="C:oxidoreductase complex"/>
    <property type="evidence" value="ECO:0000250"/>
    <property type="project" value="UniProtKB"/>
</dbReference>
<dbReference type="GO" id="GO:0004316">
    <property type="term" value="F:3-oxoacyl-[acyl-carrier-protein] reductase (NADPH) activity"/>
    <property type="evidence" value="ECO:0000250"/>
    <property type="project" value="UniProtKB"/>
</dbReference>
<dbReference type="GO" id="GO:0070402">
    <property type="term" value="F:NADPH binding"/>
    <property type="evidence" value="ECO:0007669"/>
    <property type="project" value="Ensembl"/>
</dbReference>
<dbReference type="GO" id="GO:0008753">
    <property type="term" value="F:NADPH dehydrogenase (quinone) activity"/>
    <property type="evidence" value="ECO:0007669"/>
    <property type="project" value="UniProtKB-EC"/>
</dbReference>
<dbReference type="GO" id="GO:0016616">
    <property type="term" value="F:oxidoreductase activity, acting on the CH-OH group of donors, NAD or NADP as acceptor"/>
    <property type="evidence" value="ECO:0000318"/>
    <property type="project" value="GO_Central"/>
</dbReference>
<dbReference type="GO" id="GO:0048038">
    <property type="term" value="F:quinone binding"/>
    <property type="evidence" value="ECO:0000318"/>
    <property type="project" value="GO_Central"/>
</dbReference>
<dbReference type="GO" id="GO:0044597">
    <property type="term" value="P:daunorubicin metabolic process"/>
    <property type="evidence" value="ECO:0007669"/>
    <property type="project" value="Ensembl"/>
</dbReference>
<dbReference type="GO" id="GO:0044598">
    <property type="term" value="P:doxorubicin metabolic process"/>
    <property type="evidence" value="ECO:0007669"/>
    <property type="project" value="Ensembl"/>
</dbReference>
<dbReference type="GO" id="GO:0006633">
    <property type="term" value="P:fatty acid biosynthetic process"/>
    <property type="evidence" value="ECO:0000250"/>
    <property type="project" value="UniProtKB"/>
</dbReference>
<dbReference type="GO" id="GO:0051290">
    <property type="term" value="P:protein heterotetramerization"/>
    <property type="evidence" value="ECO:0000250"/>
    <property type="project" value="UniProtKB"/>
</dbReference>
<dbReference type="GO" id="GO:0051289">
    <property type="term" value="P:protein homotetramerization"/>
    <property type="evidence" value="ECO:0007669"/>
    <property type="project" value="Ensembl"/>
</dbReference>
<dbReference type="FunFam" id="3.40.50.720:FF:000285">
    <property type="entry name" value="Carbonyl reductase family member 4"/>
    <property type="match status" value="1"/>
</dbReference>
<dbReference type="Gene3D" id="3.40.50.720">
    <property type="entry name" value="NAD(P)-binding Rossmann-like Domain"/>
    <property type="match status" value="1"/>
</dbReference>
<dbReference type="InterPro" id="IPR036291">
    <property type="entry name" value="NAD(P)-bd_dom_sf"/>
</dbReference>
<dbReference type="InterPro" id="IPR020904">
    <property type="entry name" value="Sc_DH/Rdtase_CS"/>
</dbReference>
<dbReference type="InterPro" id="IPR002347">
    <property type="entry name" value="SDR_fam"/>
</dbReference>
<dbReference type="PANTHER" id="PTHR42760:SF133">
    <property type="entry name" value="3-OXOACYL-[ACYL-CARRIER-PROTEIN] REDUCTASE"/>
    <property type="match status" value="1"/>
</dbReference>
<dbReference type="PANTHER" id="PTHR42760">
    <property type="entry name" value="SHORT-CHAIN DEHYDROGENASES/REDUCTASES FAMILY MEMBER"/>
    <property type="match status" value="1"/>
</dbReference>
<dbReference type="Pfam" id="PF13561">
    <property type="entry name" value="adh_short_C2"/>
    <property type="match status" value="1"/>
</dbReference>
<dbReference type="PRINTS" id="PR00081">
    <property type="entry name" value="GDHRDH"/>
</dbReference>
<dbReference type="PRINTS" id="PR00080">
    <property type="entry name" value="SDRFAMILY"/>
</dbReference>
<dbReference type="SMART" id="SM00822">
    <property type="entry name" value="PKS_KR"/>
    <property type="match status" value="1"/>
</dbReference>
<dbReference type="SUPFAM" id="SSF51735">
    <property type="entry name" value="NAD(P)-binding Rossmann-fold domains"/>
    <property type="match status" value="1"/>
</dbReference>
<dbReference type="PROSITE" id="PS00061">
    <property type="entry name" value="ADH_SHORT"/>
    <property type="match status" value="1"/>
</dbReference>
<comment type="function">
    <text evidence="1">Component of the heterotetramer complex KAR (3-ketoacyl-[acyl carrier protein] reductase or 3-ketoacyl-[ACP] reductase) that forms part of the mitochondrial fatty acid synthase (mtFAS). Beta-subunit of the KAR heterotetramer complex, responsible for the 3-ketoacyl-ACP reductase activity of the mtFAS, reduces 3-oxoacyl-[ACP] to (3R)-hydroxyacyl-[ACP] in a NADPH-dependent manner with no chain length preference, thereby participating in mitochondrial fatty acid biosynthesis. The homotetramer has NADPH-dependent quinone reductase activity (in vitro), hence could play a role in protection against cytotoxicity of exogenous quinones. As a heterotetramer, it can also reduce 9,10-phenanthrenequinone, 1,4-benzoquinone and various other o-quinones and p-quinones (in vitro).</text>
</comment>
<comment type="catalytic activity">
    <reaction evidence="1">
        <text>a (3R)-hydroxyacyl-[ACP] + NADP(+) = a 3-oxoacyl-[ACP] + NADPH + H(+)</text>
        <dbReference type="Rhea" id="RHEA:17397"/>
        <dbReference type="Rhea" id="RHEA-COMP:9916"/>
        <dbReference type="Rhea" id="RHEA-COMP:9945"/>
        <dbReference type="ChEBI" id="CHEBI:15378"/>
        <dbReference type="ChEBI" id="CHEBI:57783"/>
        <dbReference type="ChEBI" id="CHEBI:58349"/>
        <dbReference type="ChEBI" id="CHEBI:78776"/>
        <dbReference type="ChEBI" id="CHEBI:78827"/>
        <dbReference type="EC" id="1.1.1.100"/>
    </reaction>
    <physiologicalReaction direction="right-to-left" evidence="1">
        <dbReference type="Rhea" id="RHEA:17399"/>
    </physiologicalReaction>
</comment>
<comment type="catalytic activity">
    <reaction evidence="1">
        <text>a quinone + NADPH + H(+) = a quinol + NADP(+)</text>
        <dbReference type="Rhea" id="RHEA:46164"/>
        <dbReference type="ChEBI" id="CHEBI:15378"/>
        <dbReference type="ChEBI" id="CHEBI:24646"/>
        <dbReference type="ChEBI" id="CHEBI:57783"/>
        <dbReference type="ChEBI" id="CHEBI:58349"/>
        <dbReference type="ChEBI" id="CHEBI:132124"/>
        <dbReference type="EC" id="1.6.5.10"/>
    </reaction>
    <physiologicalReaction direction="left-to-right" evidence="1">
        <dbReference type="Rhea" id="RHEA:46165"/>
    </physiologicalReaction>
</comment>
<comment type="pathway">
    <text evidence="1">Lipid metabolism; fatty acid biosynthesis.</text>
</comment>
<comment type="subunit">
    <text evidence="1">Homotetramer (in vitro). Heterotetramer with HSD17B8; contains two molecules each of HSD17B8 and CBR4. Does not form homotetramers when HSD17B8 is coexpressed, only heterotetramers (in vitro).</text>
</comment>
<comment type="subcellular location">
    <subcellularLocation>
        <location evidence="1">Mitochondrion matrix</location>
    </subcellularLocation>
</comment>
<comment type="similarity">
    <text evidence="4">Belongs to the short-chain dehydrogenases/reductases (SDR) family.</text>
</comment>
<reference key="1">
    <citation type="submission" date="2007-03" db="EMBL/GenBank/DDBJ databases">
        <authorList>
            <consortium name="NIH - Mammalian Gene Collection (MGC) project"/>
        </authorList>
    </citation>
    <scope>NUCLEOTIDE SEQUENCE [LARGE SCALE MRNA]</scope>
    <source>
        <strain>Hereford</strain>
        <tissue>Ascending colon</tissue>
    </source>
</reference>
<gene>
    <name type="primary">CBR4</name>
</gene>
<sequence length="237" mass="25269">MDKVCAVFGGSRGIGRAVARLMAQRGYRLAIVARNLEGARAAAGDLGGDHLALSCDVAKEHDVQNTFEEIEKNLGRVNFLVNAAGINRDNLLVRTNTEDMLSQLHTNLLGSMLTCRAALKTMIKQQRGSIVNVGSVVGLKGNSGQSVYSASKGGLVGFSRALAKEVAKKKIRVNVVAPGFIHTDMTKDLNEELLKKNIPLGRFGDALDVAQAAVFLLESPYVTGHVLVVDGGLQLTM</sequence>
<name>CBR4_BOVIN</name>
<keyword id="KW-0007">Acetylation</keyword>
<keyword id="KW-0275">Fatty acid biosynthesis</keyword>
<keyword id="KW-0276">Fatty acid metabolism</keyword>
<keyword id="KW-0444">Lipid biosynthesis</keyword>
<keyword id="KW-0443">Lipid metabolism</keyword>
<keyword id="KW-0496">Mitochondrion</keyword>
<keyword id="KW-0520">NAD</keyword>
<keyword id="KW-0521">NADP</keyword>
<keyword id="KW-0560">Oxidoreductase</keyword>
<keyword id="KW-1185">Reference proteome</keyword>
<protein>
    <recommendedName>
        <fullName>3-oxoacyl-[acyl-carrier-protein] reductase</fullName>
        <ecNumber evidence="1">1.1.1.100</ecNumber>
    </recommendedName>
    <alternativeName>
        <fullName evidence="1">3-ketoacyl-[acyl-carrier-protein] reductase beta subunit</fullName>
        <shortName evidence="1">KAR beta subunit</shortName>
    </alternativeName>
    <alternativeName>
        <fullName>Carbonyl reductase family member 4</fullName>
        <shortName>CBR4</shortName>
    </alternativeName>
    <alternativeName>
        <fullName>Quinone reductase CBR4</fullName>
        <ecNumber evidence="1">1.6.5.10</ecNumber>
    </alternativeName>
</protein>
<feature type="chain" id="PRO_0000319877" description="3-oxoacyl-[acyl-carrier-protein] reductase">
    <location>
        <begin position="1"/>
        <end position="237"/>
    </location>
</feature>
<feature type="active site" description="Proton acceptor" evidence="3">
    <location>
        <position position="148"/>
    </location>
</feature>
<feature type="binding site" evidence="1">
    <location>
        <begin position="11"/>
        <end position="14"/>
    </location>
    <ligand>
        <name>NADP(+)</name>
        <dbReference type="ChEBI" id="CHEBI:58349"/>
    </ligand>
</feature>
<feature type="binding site" evidence="1">
    <location>
        <begin position="34"/>
        <end position="35"/>
    </location>
    <ligand>
        <name>NADP(+)</name>
        <dbReference type="ChEBI" id="CHEBI:58349"/>
    </ligand>
</feature>
<feature type="binding site" evidence="1">
    <location>
        <position position="56"/>
    </location>
    <ligand>
        <name>NADP(+)</name>
        <dbReference type="ChEBI" id="CHEBI:58349"/>
    </ligand>
</feature>
<feature type="binding site" evidence="1">
    <location>
        <begin position="83"/>
        <end position="85"/>
    </location>
    <ligand>
        <name>NADP(+)</name>
        <dbReference type="ChEBI" id="CHEBI:58349"/>
    </ligand>
</feature>
<feature type="binding site" evidence="1">
    <location>
        <position position="135"/>
    </location>
    <ligand>
        <name>substrate</name>
    </ligand>
</feature>
<feature type="binding site" evidence="1">
    <location>
        <position position="148"/>
    </location>
    <ligand>
        <name>NADP(+)</name>
        <dbReference type="ChEBI" id="CHEBI:58349"/>
    </ligand>
</feature>
<feature type="binding site" evidence="1">
    <location>
        <position position="152"/>
    </location>
    <ligand>
        <name>NADP(+)</name>
        <dbReference type="ChEBI" id="CHEBI:58349"/>
    </ligand>
</feature>
<feature type="binding site" evidence="1">
    <location>
        <begin position="181"/>
        <end position="183"/>
    </location>
    <ligand>
        <name>NADP(+)</name>
        <dbReference type="ChEBI" id="CHEBI:58349"/>
    </ligand>
</feature>
<feature type="site" description="Important for interaction with acyl carrier protein (ACP)" evidence="1">
    <location>
        <position position="169"/>
    </location>
</feature>
<feature type="modified residue" description="N-acetylmethionine" evidence="1">
    <location>
        <position position="1"/>
    </location>
</feature>
<feature type="modified residue" description="N6-acetyllysine" evidence="2">
    <location>
        <position position="195"/>
    </location>
</feature>